<sequence length="507" mass="55312">MVNIRPDEISSIIRKQIEQYNQEVKIVNIGTVLQVGDGIARIYGLDKVMAGELVEFEDGTVGIALNLESDNVGAVLMGDGLTIQEGSSVKATGKIAQIPVSDAYLGRVVNALAQPIDGKGQIPASEFRLIESPAPGIISRRSVYEPMQTGLIAIDSMIPIGRGQRELIIGDRQTGKTAVAIDTILNQKGQNVVCVYVAIGQKASSVAQVVNTFEDRGALEYTIVVAETANSPATLQYLAPYTGAALAEYFMYRKQHTLIIYDDLSKQAQAYRQMSLLLRRPPGREAYPGDVFYLHSRLLERAAKLSSNLGEGSMTALPIVETQAGDVSAYIPTNVISITDGQIFLSADLFNAGIRPAINVGISVSRVGSAAQIKAMKQVAGKLKLELAQFAELEAFAQFASDLDKATQNQLARGQRLRELLKQSQSAPLSVEEQIATIYTGVNGYLDVLETGQVKKFLIQLREYLVTNKPQFAEIIRSTKVFTEQAENLLKEAITEHIELFLFQEEK</sequence>
<keyword id="KW-0066">ATP synthesis</keyword>
<keyword id="KW-0067">ATP-binding</keyword>
<keyword id="KW-0139">CF(1)</keyword>
<keyword id="KW-0150">Chloroplast</keyword>
<keyword id="KW-0375">Hydrogen ion transport</keyword>
<keyword id="KW-0406">Ion transport</keyword>
<keyword id="KW-0472">Membrane</keyword>
<keyword id="KW-0547">Nucleotide-binding</keyword>
<keyword id="KW-0934">Plastid</keyword>
<keyword id="KW-0793">Thylakoid</keyword>
<keyword id="KW-1278">Translocase</keyword>
<keyword id="KW-0813">Transport</keyword>
<evidence type="ECO:0000255" key="1">
    <source>
        <dbReference type="HAMAP-Rule" id="MF_01346"/>
    </source>
</evidence>
<comment type="function">
    <text>Produces ATP from ADP in the presence of a proton gradient across the membrane. The alpha chain is a regulatory subunit.</text>
</comment>
<comment type="catalytic activity">
    <reaction evidence="1">
        <text>ATP + H2O + 4 H(+)(in) = ADP + phosphate + 5 H(+)(out)</text>
        <dbReference type="Rhea" id="RHEA:57720"/>
        <dbReference type="ChEBI" id="CHEBI:15377"/>
        <dbReference type="ChEBI" id="CHEBI:15378"/>
        <dbReference type="ChEBI" id="CHEBI:30616"/>
        <dbReference type="ChEBI" id="CHEBI:43474"/>
        <dbReference type="ChEBI" id="CHEBI:456216"/>
        <dbReference type="EC" id="7.1.2.2"/>
    </reaction>
</comment>
<comment type="subunit">
    <text evidence="1">F-type ATPases have 2 components, CF(1) - the catalytic core - and CF(0) - the membrane proton channel. CF(1) has five subunits: alpha(3), beta(3), gamma(1), delta(1), epsilon(1). CF(0) has four main subunits: a, b, b' and c.</text>
</comment>
<comment type="subcellular location">
    <subcellularLocation>
        <location evidence="1">Plastid</location>
        <location evidence="1">Chloroplast thylakoid membrane</location>
        <topology evidence="1">Peripheral membrane protein</topology>
    </subcellularLocation>
</comment>
<comment type="similarity">
    <text evidence="1">Belongs to the ATPase alpha/beta chains family.</text>
</comment>
<accession>P06283</accession>
<gene>
    <name evidence="1" type="primary">atpA</name>
</gene>
<dbReference type="EC" id="7.1.2.2" evidence="1"/>
<dbReference type="EMBL" id="X04465">
    <property type="protein sequence ID" value="CAA28068.1"/>
    <property type="molecule type" value="Genomic_DNA"/>
</dbReference>
<dbReference type="PIR" id="A01021">
    <property type="entry name" value="PWLVA"/>
</dbReference>
<dbReference type="RefSeq" id="NP_039282.1">
    <property type="nucleotide sequence ID" value="NC_001319.1"/>
</dbReference>
<dbReference type="SMR" id="P06283"/>
<dbReference type="GeneID" id="2702540"/>
<dbReference type="GO" id="GO:0009535">
    <property type="term" value="C:chloroplast thylakoid membrane"/>
    <property type="evidence" value="ECO:0007669"/>
    <property type="project" value="UniProtKB-SubCell"/>
</dbReference>
<dbReference type="GO" id="GO:0045259">
    <property type="term" value="C:proton-transporting ATP synthase complex"/>
    <property type="evidence" value="ECO:0007669"/>
    <property type="project" value="UniProtKB-KW"/>
</dbReference>
<dbReference type="GO" id="GO:0005524">
    <property type="term" value="F:ATP binding"/>
    <property type="evidence" value="ECO:0007669"/>
    <property type="project" value="UniProtKB-UniRule"/>
</dbReference>
<dbReference type="GO" id="GO:0046933">
    <property type="term" value="F:proton-transporting ATP synthase activity, rotational mechanism"/>
    <property type="evidence" value="ECO:0007669"/>
    <property type="project" value="UniProtKB-UniRule"/>
</dbReference>
<dbReference type="CDD" id="cd18113">
    <property type="entry name" value="ATP-synt_F1_alpha_C"/>
    <property type="match status" value="1"/>
</dbReference>
<dbReference type="CDD" id="cd18116">
    <property type="entry name" value="ATP-synt_F1_alpha_N"/>
    <property type="match status" value="1"/>
</dbReference>
<dbReference type="CDD" id="cd01132">
    <property type="entry name" value="F1-ATPase_alpha_CD"/>
    <property type="match status" value="1"/>
</dbReference>
<dbReference type="FunFam" id="1.20.150.20:FF:000001">
    <property type="entry name" value="ATP synthase subunit alpha"/>
    <property type="match status" value="1"/>
</dbReference>
<dbReference type="FunFam" id="2.40.30.20:FF:000001">
    <property type="entry name" value="ATP synthase subunit alpha"/>
    <property type="match status" value="1"/>
</dbReference>
<dbReference type="FunFam" id="3.40.50.300:FF:000002">
    <property type="entry name" value="ATP synthase subunit alpha"/>
    <property type="match status" value="1"/>
</dbReference>
<dbReference type="Gene3D" id="2.40.30.20">
    <property type="match status" value="1"/>
</dbReference>
<dbReference type="Gene3D" id="1.20.150.20">
    <property type="entry name" value="ATP synthase alpha/beta chain, C-terminal domain"/>
    <property type="match status" value="1"/>
</dbReference>
<dbReference type="Gene3D" id="3.40.50.300">
    <property type="entry name" value="P-loop containing nucleotide triphosphate hydrolases"/>
    <property type="match status" value="1"/>
</dbReference>
<dbReference type="HAMAP" id="MF_01346">
    <property type="entry name" value="ATP_synth_alpha_bact"/>
    <property type="match status" value="1"/>
</dbReference>
<dbReference type="InterPro" id="IPR023366">
    <property type="entry name" value="ATP_synth_asu-like_sf"/>
</dbReference>
<dbReference type="InterPro" id="IPR000793">
    <property type="entry name" value="ATP_synth_asu_C"/>
</dbReference>
<dbReference type="InterPro" id="IPR038376">
    <property type="entry name" value="ATP_synth_asu_C_sf"/>
</dbReference>
<dbReference type="InterPro" id="IPR033732">
    <property type="entry name" value="ATP_synth_F1_a_nt-bd_dom"/>
</dbReference>
<dbReference type="InterPro" id="IPR005294">
    <property type="entry name" value="ATP_synth_F1_asu"/>
</dbReference>
<dbReference type="InterPro" id="IPR020003">
    <property type="entry name" value="ATPase_a/bsu_AS"/>
</dbReference>
<dbReference type="InterPro" id="IPR004100">
    <property type="entry name" value="ATPase_F1/V1/A1_a/bsu_N"/>
</dbReference>
<dbReference type="InterPro" id="IPR036121">
    <property type="entry name" value="ATPase_F1/V1/A1_a/bsu_N_sf"/>
</dbReference>
<dbReference type="InterPro" id="IPR000194">
    <property type="entry name" value="ATPase_F1/V1/A1_a/bsu_nucl-bd"/>
</dbReference>
<dbReference type="InterPro" id="IPR027417">
    <property type="entry name" value="P-loop_NTPase"/>
</dbReference>
<dbReference type="NCBIfam" id="TIGR00962">
    <property type="entry name" value="atpA"/>
    <property type="match status" value="1"/>
</dbReference>
<dbReference type="NCBIfam" id="NF009884">
    <property type="entry name" value="PRK13343.1"/>
    <property type="match status" value="1"/>
</dbReference>
<dbReference type="PANTHER" id="PTHR48082">
    <property type="entry name" value="ATP SYNTHASE SUBUNIT ALPHA, MITOCHONDRIAL"/>
    <property type="match status" value="1"/>
</dbReference>
<dbReference type="PANTHER" id="PTHR48082:SF2">
    <property type="entry name" value="ATP SYNTHASE SUBUNIT ALPHA, MITOCHONDRIAL"/>
    <property type="match status" value="1"/>
</dbReference>
<dbReference type="Pfam" id="PF00006">
    <property type="entry name" value="ATP-synt_ab"/>
    <property type="match status" value="1"/>
</dbReference>
<dbReference type="Pfam" id="PF00306">
    <property type="entry name" value="ATP-synt_ab_C"/>
    <property type="match status" value="1"/>
</dbReference>
<dbReference type="Pfam" id="PF02874">
    <property type="entry name" value="ATP-synt_ab_N"/>
    <property type="match status" value="1"/>
</dbReference>
<dbReference type="PIRSF" id="PIRSF039088">
    <property type="entry name" value="F_ATPase_subunit_alpha"/>
    <property type="match status" value="1"/>
</dbReference>
<dbReference type="SUPFAM" id="SSF47917">
    <property type="entry name" value="C-terminal domain of alpha and beta subunits of F1 ATP synthase"/>
    <property type="match status" value="1"/>
</dbReference>
<dbReference type="SUPFAM" id="SSF50615">
    <property type="entry name" value="N-terminal domain of alpha and beta subunits of F1 ATP synthase"/>
    <property type="match status" value="1"/>
</dbReference>
<dbReference type="SUPFAM" id="SSF52540">
    <property type="entry name" value="P-loop containing nucleoside triphosphate hydrolases"/>
    <property type="match status" value="1"/>
</dbReference>
<dbReference type="PROSITE" id="PS00152">
    <property type="entry name" value="ATPASE_ALPHA_BETA"/>
    <property type="match status" value="1"/>
</dbReference>
<proteinExistence type="inferred from homology"/>
<name>ATPA_MARPO</name>
<reference key="1">
    <citation type="journal article" date="1986" name="Nature">
        <title>Chloroplast gene organization deduced from complete sequence of liverwort Marchantia polymorpha chloroplast DNA.</title>
        <authorList>
            <person name="Ohyama K."/>
            <person name="Fukuzawa H."/>
            <person name="Kohchi T."/>
            <person name="Shirai H."/>
            <person name="Sano T."/>
            <person name="Sano S."/>
            <person name="Umesono K."/>
            <person name="Shiki Y."/>
            <person name="Takeuchi M."/>
            <person name="Chang Z."/>
            <person name="Aota S."/>
            <person name="Inokuchi H."/>
            <person name="Ozeki H."/>
        </authorList>
    </citation>
    <scope>NUCLEOTIDE SEQUENCE [LARGE SCALE GENOMIC DNA]</scope>
</reference>
<reference key="2">
    <citation type="journal article" date="1988" name="J. Mol. Biol.">
        <title>Structure and organization of Marchantia polymorpha chloroplast genome. II. Gene organization of the large single copy region from rps'12 to atpB.</title>
        <authorList>
            <person name="Umesono K."/>
            <person name="Inokuchi H."/>
            <person name="Shiki Y."/>
            <person name="Takeuchi M."/>
            <person name="Chang Z."/>
            <person name="Fukuzawa H."/>
            <person name="Kohchi T."/>
            <person name="Shirai H."/>
            <person name="Ohyama K."/>
            <person name="Ozeki H."/>
        </authorList>
    </citation>
    <scope>NUCLEOTIDE SEQUENCE [GENOMIC DNA]</scope>
</reference>
<geneLocation type="chloroplast"/>
<feature type="chain" id="PRO_0000144380" description="ATP synthase subunit alpha, chloroplastic">
    <location>
        <begin position="1"/>
        <end position="507"/>
    </location>
</feature>
<feature type="binding site" evidence="1">
    <location>
        <begin position="170"/>
        <end position="177"/>
    </location>
    <ligand>
        <name>ATP</name>
        <dbReference type="ChEBI" id="CHEBI:30616"/>
    </ligand>
</feature>
<feature type="site" description="Required for activity" evidence="1">
    <location>
        <position position="363"/>
    </location>
</feature>
<protein>
    <recommendedName>
        <fullName evidence="1">ATP synthase subunit alpha, chloroplastic</fullName>
        <ecNumber evidence="1">7.1.2.2</ecNumber>
    </recommendedName>
    <alternativeName>
        <fullName evidence="1">ATP synthase F1 sector subunit alpha</fullName>
    </alternativeName>
    <alternativeName>
        <fullName evidence="1">F-ATPase subunit alpha</fullName>
    </alternativeName>
</protein>
<organism>
    <name type="scientific">Marchantia polymorpha</name>
    <name type="common">Common liverwort</name>
    <name type="synonym">Marchantia aquatica</name>
    <dbReference type="NCBI Taxonomy" id="3197"/>
    <lineage>
        <taxon>Eukaryota</taxon>
        <taxon>Viridiplantae</taxon>
        <taxon>Streptophyta</taxon>
        <taxon>Embryophyta</taxon>
        <taxon>Marchantiophyta</taxon>
        <taxon>Marchantiopsida</taxon>
        <taxon>Marchantiidae</taxon>
        <taxon>Marchantiales</taxon>
        <taxon>Marchantiaceae</taxon>
        <taxon>Marchantia</taxon>
    </lineage>
</organism>